<name>DPSG_STRPE</name>
<accession>Q9ZAU0</accession>
<sequence length="84" mass="9395">MAELSLAELREIMRQSLGEDEVPDLADADTVTFEDLGLDSLAVLETVNHIERTYGVKLPEEELAEVRTPHSMLIFVNERLRAAA</sequence>
<evidence type="ECO:0000255" key="1">
    <source>
        <dbReference type="PROSITE-ProRule" id="PRU00258"/>
    </source>
</evidence>
<evidence type="ECO:0000269" key="2">
    <source>
    </source>
</evidence>
<organism>
    <name type="scientific">Streptomyces peucetius</name>
    <dbReference type="NCBI Taxonomy" id="1950"/>
    <lineage>
        <taxon>Bacteria</taxon>
        <taxon>Bacillati</taxon>
        <taxon>Actinomycetota</taxon>
        <taxon>Actinomycetes</taxon>
        <taxon>Kitasatosporales</taxon>
        <taxon>Streptomycetaceae</taxon>
        <taxon>Streptomyces</taxon>
    </lineage>
</organism>
<proteinExistence type="inferred from homology"/>
<gene>
    <name type="primary">dpsG</name>
</gene>
<keyword id="KW-0045">Antibiotic biosynthesis</keyword>
<keyword id="KW-0596">Phosphopantetheine</keyword>
<keyword id="KW-0597">Phosphoprotein</keyword>
<comment type="function">
    <text evidence="2">Involved in the biosynthesis of aklanonate which is an important precursor common to the formation of the clinically significant anthracyclines such as carminomycin, daunorubicin (daunomycin), rhodomycin, aclacinomycin T (aklavin) and aclacinomycin A (aclarubicin). These compounds are aromatic polyketide antibiotics that exhibit high cytotoxicity and are widely applied in the chemotherapy of a variety of cancers.</text>
</comment>
<comment type="pathway">
    <text>Antibiotic biosynthesis; daunorubicin biosynthesis.</text>
</comment>
<comment type="pathway">
    <text>Antibiotic biosynthesis; carminomycin biosynthesis.</text>
</comment>
<comment type="pathway">
    <text>Antibiotic biosynthesis; rhodomycin biosynthesis.</text>
</comment>
<comment type="pathway">
    <text>Antibiotic biosynthesis; aclacinomycin biosynthesis.</text>
</comment>
<dbReference type="EMBL" id="U77891">
    <property type="protein sequence ID" value="AAD04718.1"/>
    <property type="molecule type" value="Genomic_DNA"/>
</dbReference>
<dbReference type="SMR" id="Q9ZAU0"/>
<dbReference type="KEGG" id="ag:AAD04718"/>
<dbReference type="BioCyc" id="MetaCyc:MONOMER-18188"/>
<dbReference type="UniPathway" id="UPA00054"/>
<dbReference type="UniPathway" id="UPA01040"/>
<dbReference type="UniPathway" id="UPA01042"/>
<dbReference type="UniPathway" id="UPA01043"/>
<dbReference type="GO" id="GO:0031177">
    <property type="term" value="F:phosphopantetheine binding"/>
    <property type="evidence" value="ECO:0007669"/>
    <property type="project" value="InterPro"/>
</dbReference>
<dbReference type="GO" id="GO:1901771">
    <property type="term" value="P:daunorubicin biosynthetic process"/>
    <property type="evidence" value="ECO:0000315"/>
    <property type="project" value="UniProtKB"/>
</dbReference>
<dbReference type="Gene3D" id="1.10.1200.10">
    <property type="entry name" value="ACP-like"/>
    <property type="match status" value="1"/>
</dbReference>
<dbReference type="InterPro" id="IPR036736">
    <property type="entry name" value="ACP-like_sf"/>
</dbReference>
<dbReference type="InterPro" id="IPR020806">
    <property type="entry name" value="PKS_PP-bd"/>
</dbReference>
<dbReference type="InterPro" id="IPR009081">
    <property type="entry name" value="PP-bd_ACP"/>
</dbReference>
<dbReference type="InterPro" id="IPR006162">
    <property type="entry name" value="Ppantetheine_attach_site"/>
</dbReference>
<dbReference type="Pfam" id="PF00550">
    <property type="entry name" value="PP-binding"/>
    <property type="match status" value="1"/>
</dbReference>
<dbReference type="SMART" id="SM00823">
    <property type="entry name" value="PKS_PP"/>
    <property type="match status" value="1"/>
</dbReference>
<dbReference type="SUPFAM" id="SSF47336">
    <property type="entry name" value="ACP-like"/>
    <property type="match status" value="1"/>
</dbReference>
<dbReference type="PROSITE" id="PS50075">
    <property type="entry name" value="CARRIER"/>
    <property type="match status" value="1"/>
</dbReference>
<dbReference type="PROSITE" id="PS00012">
    <property type="entry name" value="PHOSPHOPANTETHEINE"/>
    <property type="match status" value="1"/>
</dbReference>
<reference key="1">
    <citation type="journal article" date="1999" name="J. Bacteriol.">
        <title>Doxorubicin overproduction in Streptomyces peucetius: cloning and characterization of the dnrU ketoreductase and dnrV genes and the doxA cytochrome P-450 hydroxylase gene.</title>
        <authorList>
            <person name="Lomovskaya N."/>
            <person name="Otten S.L."/>
            <person name="Doi-Katayama Y."/>
            <person name="Fonstein L."/>
            <person name="Liu X.-C."/>
            <person name="Takatsu T."/>
            <person name="Inventi A."/>
            <person name="Filippi S."/>
            <person name="Torti F."/>
            <person name="Colombo A.L."/>
            <person name="Hutchinson C.R."/>
        </authorList>
    </citation>
    <scope>NUCLEOTIDE SEQUENCE [GENOMIC DNA]</scope>
    <scope>FUNCTION</scope>
    <source>
        <strain>ATCC 29050 / DSM 40754 / JCM 9920 / NBRC 100596 / NCIMB 10972</strain>
    </source>
</reference>
<protein>
    <recommendedName>
        <fullName>Anthracycline acyl carrier protein DpsG</fullName>
    </recommendedName>
</protein>
<feature type="chain" id="PRO_0000425717" description="Anthracycline acyl carrier protein DpsG">
    <location>
        <begin position="1"/>
        <end position="84"/>
    </location>
</feature>
<feature type="domain" description="Carrier" evidence="1">
    <location>
        <begin position="3"/>
        <end position="80"/>
    </location>
</feature>
<feature type="modified residue" description="O-(pantetheine 4'-phosphoryl)serine" evidence="1">
    <location>
        <position position="40"/>
    </location>
</feature>